<protein>
    <recommendedName>
        <fullName>Putative oxidoreductase YteT</fullName>
        <ecNumber>1.-.-.-</ecNumber>
    </recommendedName>
</protein>
<evidence type="ECO:0000255" key="1"/>
<evidence type="ECO:0000269" key="2">
    <source>
    </source>
</evidence>
<evidence type="ECO:0000305" key="3"/>
<dbReference type="EC" id="1.-.-.-"/>
<dbReference type="EMBL" id="AF008220">
    <property type="protein sequence ID" value="AAC00274.1"/>
    <property type="molecule type" value="Genomic_DNA"/>
</dbReference>
<dbReference type="EMBL" id="AL009126">
    <property type="protein sequence ID" value="CAB14988.1"/>
    <property type="molecule type" value="Genomic_DNA"/>
</dbReference>
<dbReference type="PIR" id="C69991">
    <property type="entry name" value="C69991"/>
</dbReference>
<dbReference type="RefSeq" id="WP_009968003.1">
    <property type="nucleotide sequence ID" value="NZ_OZ025638.1"/>
</dbReference>
<dbReference type="SMR" id="O34371"/>
<dbReference type="FunCoup" id="O34371">
    <property type="interactions" value="100"/>
</dbReference>
<dbReference type="STRING" id="224308.BSU30100"/>
<dbReference type="PaxDb" id="224308-BSU30100"/>
<dbReference type="DNASU" id="937274"/>
<dbReference type="EnsemblBacteria" id="CAB14988">
    <property type="protein sequence ID" value="CAB14988"/>
    <property type="gene ID" value="BSU_30100"/>
</dbReference>
<dbReference type="GeneID" id="937274"/>
<dbReference type="KEGG" id="bsu:BSU30100"/>
<dbReference type="PATRIC" id="fig|224308.179.peg.3267"/>
<dbReference type="eggNOG" id="COG0673">
    <property type="taxonomic scope" value="Bacteria"/>
</dbReference>
<dbReference type="InParanoid" id="O34371"/>
<dbReference type="OrthoDB" id="9781031at2"/>
<dbReference type="PhylomeDB" id="O34371"/>
<dbReference type="BioCyc" id="BSUB:BSU30100-MONOMER"/>
<dbReference type="Proteomes" id="UP000001570">
    <property type="component" value="Chromosome"/>
</dbReference>
<dbReference type="GO" id="GO:0000166">
    <property type="term" value="F:nucleotide binding"/>
    <property type="evidence" value="ECO:0007669"/>
    <property type="project" value="InterPro"/>
</dbReference>
<dbReference type="GO" id="GO:0016491">
    <property type="term" value="F:oxidoreductase activity"/>
    <property type="evidence" value="ECO:0007669"/>
    <property type="project" value="UniProtKB-KW"/>
</dbReference>
<dbReference type="Gene3D" id="3.30.360.10">
    <property type="entry name" value="Dihydrodipicolinate Reductase, domain 2"/>
    <property type="match status" value="1"/>
</dbReference>
<dbReference type="Gene3D" id="3.40.50.720">
    <property type="entry name" value="NAD(P)-binding Rossmann-like Domain"/>
    <property type="match status" value="1"/>
</dbReference>
<dbReference type="InterPro" id="IPR004104">
    <property type="entry name" value="Gfo/Idh/MocA-like_OxRdtase_C"/>
</dbReference>
<dbReference type="InterPro" id="IPR000683">
    <property type="entry name" value="Gfo/Idh/MocA-like_OxRdtase_N"/>
</dbReference>
<dbReference type="InterPro" id="IPR051450">
    <property type="entry name" value="Gfo/Idh/MocA_Oxidoreductases"/>
</dbReference>
<dbReference type="InterPro" id="IPR036291">
    <property type="entry name" value="NAD(P)-bd_dom_sf"/>
</dbReference>
<dbReference type="PANTHER" id="PTHR43377">
    <property type="entry name" value="BILIVERDIN REDUCTASE A"/>
    <property type="match status" value="1"/>
</dbReference>
<dbReference type="PANTHER" id="PTHR43377:SF2">
    <property type="entry name" value="BINDING ROSSMANN FOLD OXIDOREDUCTASE, PUTATIVE (AFU_ORTHOLOGUE AFUA_4G00560)-RELATED"/>
    <property type="match status" value="1"/>
</dbReference>
<dbReference type="Pfam" id="PF01408">
    <property type="entry name" value="GFO_IDH_MocA"/>
    <property type="match status" value="1"/>
</dbReference>
<dbReference type="Pfam" id="PF02894">
    <property type="entry name" value="GFO_IDH_MocA_C"/>
    <property type="match status" value="1"/>
</dbReference>
<dbReference type="SUPFAM" id="SSF55347">
    <property type="entry name" value="Glyceraldehyde-3-phosphate dehydrogenase-like, C-terminal domain"/>
    <property type="match status" value="1"/>
</dbReference>
<dbReference type="SUPFAM" id="SSF51735">
    <property type="entry name" value="NAD(P)-binding Rossmann-fold domains"/>
    <property type="match status" value="1"/>
</dbReference>
<accession>O34371</accession>
<accession>Q795R6</accession>
<feature type="signal peptide" evidence="1">
    <location>
        <begin position="1"/>
        <end position="23"/>
    </location>
</feature>
<feature type="chain" id="PRO_0000378077" description="Putative oxidoreductase YteT">
    <location>
        <begin position="24"/>
        <end position="428"/>
    </location>
</feature>
<organism>
    <name type="scientific">Bacillus subtilis (strain 168)</name>
    <dbReference type="NCBI Taxonomy" id="224308"/>
    <lineage>
        <taxon>Bacteria</taxon>
        <taxon>Bacillati</taxon>
        <taxon>Bacillota</taxon>
        <taxon>Bacilli</taxon>
        <taxon>Bacillales</taxon>
        <taxon>Bacillaceae</taxon>
        <taxon>Bacillus</taxon>
    </lineage>
</organism>
<gene>
    <name type="primary">yteT</name>
    <name type="ordered locus">BSU30100</name>
</gene>
<sequence length="428" mass="48892">MKNIVFCGLSSRAFSMFIKPLMERFSTHYEITGLLDADPKRFAVCKKKFPELAHVPEFSEDAFDEMMRVSKPDIVIVAGRDDTHVAYIVKSLQWNTDVITEKPMVTTVQDANRVLEAEAKSEGKVTVAFNYRYSPFHRKIKEMILDGKIGRVTSVDLNWYIDTYHGASYFKRWNRSRQFSGGLSVHKSTHHFDLVNWWLGQNPEEVFAYGALNYYGPDSEWNPLPEEDGRFCGTCRVKEKCHYYSRWHPRSSKASIKDDHLEAGDQSSLYTAYRPDACIFDEEIDIEDTYVAAVKYDGGALLSYSIIFSAPYEGYRLTINGTKGRIESNEFHEPSRIPFAFPEQTIEYYPLFESKQTIQVVKNEGGHGGGDPLLLEDLFLGKDPLRRYDILAGAEAGAYSIAVGEGMWRSVAEKKPIGMKELFQMQNV</sequence>
<keyword id="KW-0560">Oxidoreductase</keyword>
<keyword id="KW-1185">Reference proteome</keyword>
<keyword id="KW-0732">Signal</keyword>
<proteinExistence type="evidence at transcript level"/>
<comment type="function">
    <text evidence="2">May play a role in the degradation of type I rhamnogalacturonan derived from plant cell walls.</text>
</comment>
<comment type="induction">
    <text evidence="2">Up-regulated by growth on type I rhamnogalacturonan.</text>
</comment>
<comment type="similarity">
    <text evidence="3">Belongs to the Gfo/Idh/MocA family.</text>
</comment>
<reference key="1">
    <citation type="journal article" date="1997" name="Microbiology">
        <title>Sequencing and functional annotation of the Bacillus subtilis genes in the 200 kb rrnB-dnaB region.</title>
        <authorList>
            <person name="Lapidus A."/>
            <person name="Galleron N."/>
            <person name="Sorokin A."/>
            <person name="Ehrlich S.D."/>
        </authorList>
    </citation>
    <scope>NUCLEOTIDE SEQUENCE [GENOMIC DNA]</scope>
</reference>
<reference key="2">
    <citation type="journal article" date="1997" name="Nature">
        <title>The complete genome sequence of the Gram-positive bacterium Bacillus subtilis.</title>
        <authorList>
            <person name="Kunst F."/>
            <person name="Ogasawara N."/>
            <person name="Moszer I."/>
            <person name="Albertini A.M."/>
            <person name="Alloni G."/>
            <person name="Azevedo V."/>
            <person name="Bertero M.G."/>
            <person name="Bessieres P."/>
            <person name="Bolotin A."/>
            <person name="Borchert S."/>
            <person name="Borriss R."/>
            <person name="Boursier L."/>
            <person name="Brans A."/>
            <person name="Braun M."/>
            <person name="Brignell S.C."/>
            <person name="Bron S."/>
            <person name="Brouillet S."/>
            <person name="Bruschi C.V."/>
            <person name="Caldwell B."/>
            <person name="Capuano V."/>
            <person name="Carter N.M."/>
            <person name="Choi S.-K."/>
            <person name="Codani J.-J."/>
            <person name="Connerton I.F."/>
            <person name="Cummings N.J."/>
            <person name="Daniel R.A."/>
            <person name="Denizot F."/>
            <person name="Devine K.M."/>
            <person name="Duesterhoeft A."/>
            <person name="Ehrlich S.D."/>
            <person name="Emmerson P.T."/>
            <person name="Entian K.-D."/>
            <person name="Errington J."/>
            <person name="Fabret C."/>
            <person name="Ferrari E."/>
            <person name="Foulger D."/>
            <person name="Fritz C."/>
            <person name="Fujita M."/>
            <person name="Fujita Y."/>
            <person name="Fuma S."/>
            <person name="Galizzi A."/>
            <person name="Galleron N."/>
            <person name="Ghim S.-Y."/>
            <person name="Glaser P."/>
            <person name="Goffeau A."/>
            <person name="Golightly E.J."/>
            <person name="Grandi G."/>
            <person name="Guiseppi G."/>
            <person name="Guy B.J."/>
            <person name="Haga K."/>
            <person name="Haiech J."/>
            <person name="Harwood C.R."/>
            <person name="Henaut A."/>
            <person name="Hilbert H."/>
            <person name="Holsappel S."/>
            <person name="Hosono S."/>
            <person name="Hullo M.-F."/>
            <person name="Itaya M."/>
            <person name="Jones L.-M."/>
            <person name="Joris B."/>
            <person name="Karamata D."/>
            <person name="Kasahara Y."/>
            <person name="Klaerr-Blanchard M."/>
            <person name="Klein C."/>
            <person name="Kobayashi Y."/>
            <person name="Koetter P."/>
            <person name="Koningstein G."/>
            <person name="Krogh S."/>
            <person name="Kumano M."/>
            <person name="Kurita K."/>
            <person name="Lapidus A."/>
            <person name="Lardinois S."/>
            <person name="Lauber J."/>
            <person name="Lazarevic V."/>
            <person name="Lee S.-M."/>
            <person name="Levine A."/>
            <person name="Liu H."/>
            <person name="Masuda S."/>
            <person name="Mauel C."/>
            <person name="Medigue C."/>
            <person name="Medina N."/>
            <person name="Mellado R.P."/>
            <person name="Mizuno M."/>
            <person name="Moestl D."/>
            <person name="Nakai S."/>
            <person name="Noback M."/>
            <person name="Noone D."/>
            <person name="O'Reilly M."/>
            <person name="Ogawa K."/>
            <person name="Ogiwara A."/>
            <person name="Oudega B."/>
            <person name="Park S.-H."/>
            <person name="Parro V."/>
            <person name="Pohl T.M."/>
            <person name="Portetelle D."/>
            <person name="Porwollik S."/>
            <person name="Prescott A.M."/>
            <person name="Presecan E."/>
            <person name="Pujic P."/>
            <person name="Purnelle B."/>
            <person name="Rapoport G."/>
            <person name="Rey M."/>
            <person name="Reynolds S."/>
            <person name="Rieger M."/>
            <person name="Rivolta C."/>
            <person name="Rocha E."/>
            <person name="Roche B."/>
            <person name="Rose M."/>
            <person name="Sadaie Y."/>
            <person name="Sato T."/>
            <person name="Scanlan E."/>
            <person name="Schleich S."/>
            <person name="Schroeter R."/>
            <person name="Scoffone F."/>
            <person name="Sekiguchi J."/>
            <person name="Sekowska A."/>
            <person name="Seror S.J."/>
            <person name="Serror P."/>
            <person name="Shin B.-S."/>
            <person name="Soldo B."/>
            <person name="Sorokin A."/>
            <person name="Tacconi E."/>
            <person name="Takagi T."/>
            <person name="Takahashi H."/>
            <person name="Takemaru K."/>
            <person name="Takeuchi M."/>
            <person name="Tamakoshi A."/>
            <person name="Tanaka T."/>
            <person name="Terpstra P."/>
            <person name="Tognoni A."/>
            <person name="Tosato V."/>
            <person name="Uchiyama S."/>
            <person name="Vandenbol M."/>
            <person name="Vannier F."/>
            <person name="Vassarotti A."/>
            <person name="Viari A."/>
            <person name="Wambutt R."/>
            <person name="Wedler E."/>
            <person name="Wedler H."/>
            <person name="Weitzenegger T."/>
            <person name="Winters P."/>
            <person name="Wipat A."/>
            <person name="Yamamoto H."/>
            <person name="Yamane K."/>
            <person name="Yasumoto K."/>
            <person name="Yata K."/>
            <person name="Yoshida K."/>
            <person name="Yoshikawa H.-F."/>
            <person name="Zumstein E."/>
            <person name="Yoshikawa H."/>
            <person name="Danchin A."/>
        </authorList>
    </citation>
    <scope>NUCLEOTIDE SEQUENCE [LARGE SCALE GENOMIC DNA]</scope>
    <source>
        <strain>168</strain>
    </source>
</reference>
<reference key="3">
    <citation type="journal article" date="2007" name="Appl. Environ. Microbiol.">
        <title>Plant cell wall degradation by saprophytic Bacillus subtilis strains: gene clusters responsible for rhamnogalacturonan depolymerization.</title>
        <authorList>
            <person name="Ochiai A."/>
            <person name="Itoh T."/>
            <person name="Kawamata A."/>
            <person name="Hashimoto W."/>
            <person name="Murata K."/>
        </authorList>
    </citation>
    <scope>INDUCTION</scope>
    <scope>FUNCTION</scope>
    <source>
        <strain>168</strain>
    </source>
</reference>
<name>YTET_BACSU</name>